<name>RL9_CLONN</name>
<evidence type="ECO:0000255" key="1">
    <source>
        <dbReference type="HAMAP-Rule" id="MF_00503"/>
    </source>
</evidence>
<evidence type="ECO:0000305" key="2"/>
<reference key="1">
    <citation type="journal article" date="2006" name="Nat. Biotechnol.">
        <title>The genome and transcriptomes of the anti-tumor agent Clostridium novyi-NT.</title>
        <authorList>
            <person name="Bettegowda C."/>
            <person name="Huang X."/>
            <person name="Lin J."/>
            <person name="Cheong I."/>
            <person name="Kohli M."/>
            <person name="Szabo S.A."/>
            <person name="Zhang X."/>
            <person name="Diaz L.A. Jr."/>
            <person name="Velculescu V.E."/>
            <person name="Parmigiani G."/>
            <person name="Kinzler K.W."/>
            <person name="Vogelstein B."/>
            <person name="Zhou S."/>
        </authorList>
    </citation>
    <scope>NUCLEOTIDE SEQUENCE [LARGE SCALE GENOMIC DNA]</scope>
    <source>
        <strain>NT</strain>
    </source>
</reference>
<feature type="chain" id="PRO_1000014770" description="Large ribosomal subunit protein bL9">
    <location>
        <begin position="1"/>
        <end position="147"/>
    </location>
</feature>
<sequence>MKVILLKDVKGKGKKGEVINASDGYARNFLLPRGLGEEATDSNMHILNRQKEAERKKKLEETEAAQALAESLRNKELKMIGKAGENGRLFGAITNKDIATELKKQFKVDIDKKKVVTETIKQLGEYEVELKLYPEISTKIKVIISEK</sequence>
<keyword id="KW-1185">Reference proteome</keyword>
<keyword id="KW-0687">Ribonucleoprotein</keyword>
<keyword id="KW-0689">Ribosomal protein</keyword>
<keyword id="KW-0694">RNA-binding</keyword>
<keyword id="KW-0699">rRNA-binding</keyword>
<dbReference type="EMBL" id="CP000382">
    <property type="protein sequence ID" value="ABK62202.1"/>
    <property type="molecule type" value="Genomic_DNA"/>
</dbReference>
<dbReference type="RefSeq" id="WP_011721016.1">
    <property type="nucleotide sequence ID" value="NC_008593.1"/>
</dbReference>
<dbReference type="SMR" id="A0PX93"/>
<dbReference type="STRING" id="386415.NT01CX_0889"/>
<dbReference type="KEGG" id="cno:NT01CX_0889"/>
<dbReference type="eggNOG" id="COG0359">
    <property type="taxonomic scope" value="Bacteria"/>
</dbReference>
<dbReference type="HOGENOM" id="CLU_078938_3_0_9"/>
<dbReference type="Proteomes" id="UP000008220">
    <property type="component" value="Chromosome"/>
</dbReference>
<dbReference type="GO" id="GO:1990904">
    <property type="term" value="C:ribonucleoprotein complex"/>
    <property type="evidence" value="ECO:0007669"/>
    <property type="project" value="UniProtKB-KW"/>
</dbReference>
<dbReference type="GO" id="GO:0005840">
    <property type="term" value="C:ribosome"/>
    <property type="evidence" value="ECO:0007669"/>
    <property type="project" value="UniProtKB-KW"/>
</dbReference>
<dbReference type="GO" id="GO:0019843">
    <property type="term" value="F:rRNA binding"/>
    <property type="evidence" value="ECO:0007669"/>
    <property type="project" value="UniProtKB-UniRule"/>
</dbReference>
<dbReference type="GO" id="GO:0003735">
    <property type="term" value="F:structural constituent of ribosome"/>
    <property type="evidence" value="ECO:0007669"/>
    <property type="project" value="InterPro"/>
</dbReference>
<dbReference type="GO" id="GO:0006412">
    <property type="term" value="P:translation"/>
    <property type="evidence" value="ECO:0007669"/>
    <property type="project" value="UniProtKB-UniRule"/>
</dbReference>
<dbReference type="FunFam" id="3.40.5.10:FF:000002">
    <property type="entry name" value="50S ribosomal protein L9"/>
    <property type="match status" value="1"/>
</dbReference>
<dbReference type="Gene3D" id="3.10.430.100">
    <property type="entry name" value="Ribosomal protein L9, C-terminal domain"/>
    <property type="match status" value="1"/>
</dbReference>
<dbReference type="Gene3D" id="3.40.5.10">
    <property type="entry name" value="Ribosomal protein L9, N-terminal domain"/>
    <property type="match status" value="1"/>
</dbReference>
<dbReference type="HAMAP" id="MF_00503">
    <property type="entry name" value="Ribosomal_bL9"/>
    <property type="match status" value="1"/>
</dbReference>
<dbReference type="InterPro" id="IPR000244">
    <property type="entry name" value="Ribosomal_bL9"/>
</dbReference>
<dbReference type="InterPro" id="IPR009027">
    <property type="entry name" value="Ribosomal_bL9/RNase_H1_N"/>
</dbReference>
<dbReference type="InterPro" id="IPR020594">
    <property type="entry name" value="Ribosomal_bL9_bac/chp"/>
</dbReference>
<dbReference type="InterPro" id="IPR020069">
    <property type="entry name" value="Ribosomal_bL9_C"/>
</dbReference>
<dbReference type="InterPro" id="IPR036791">
    <property type="entry name" value="Ribosomal_bL9_C_sf"/>
</dbReference>
<dbReference type="InterPro" id="IPR020070">
    <property type="entry name" value="Ribosomal_bL9_N"/>
</dbReference>
<dbReference type="InterPro" id="IPR036935">
    <property type="entry name" value="Ribosomal_bL9_N_sf"/>
</dbReference>
<dbReference type="NCBIfam" id="TIGR00158">
    <property type="entry name" value="L9"/>
    <property type="match status" value="1"/>
</dbReference>
<dbReference type="PANTHER" id="PTHR21368">
    <property type="entry name" value="50S RIBOSOMAL PROTEIN L9"/>
    <property type="match status" value="1"/>
</dbReference>
<dbReference type="Pfam" id="PF03948">
    <property type="entry name" value="Ribosomal_L9_C"/>
    <property type="match status" value="1"/>
</dbReference>
<dbReference type="Pfam" id="PF01281">
    <property type="entry name" value="Ribosomal_L9_N"/>
    <property type="match status" value="1"/>
</dbReference>
<dbReference type="SUPFAM" id="SSF55658">
    <property type="entry name" value="L9 N-domain-like"/>
    <property type="match status" value="1"/>
</dbReference>
<dbReference type="SUPFAM" id="SSF55653">
    <property type="entry name" value="Ribosomal protein L9 C-domain"/>
    <property type="match status" value="1"/>
</dbReference>
<dbReference type="PROSITE" id="PS00651">
    <property type="entry name" value="RIBOSOMAL_L9"/>
    <property type="match status" value="1"/>
</dbReference>
<gene>
    <name evidence="1" type="primary">rplI</name>
    <name type="ordered locus">NT01CX_0889</name>
</gene>
<organism>
    <name type="scientific">Clostridium novyi (strain NT)</name>
    <dbReference type="NCBI Taxonomy" id="386415"/>
    <lineage>
        <taxon>Bacteria</taxon>
        <taxon>Bacillati</taxon>
        <taxon>Bacillota</taxon>
        <taxon>Clostridia</taxon>
        <taxon>Eubacteriales</taxon>
        <taxon>Clostridiaceae</taxon>
        <taxon>Clostridium</taxon>
    </lineage>
</organism>
<comment type="function">
    <text evidence="1">Binds to the 23S rRNA.</text>
</comment>
<comment type="similarity">
    <text evidence="1">Belongs to the bacterial ribosomal protein bL9 family.</text>
</comment>
<proteinExistence type="inferred from homology"/>
<protein>
    <recommendedName>
        <fullName evidence="1">Large ribosomal subunit protein bL9</fullName>
    </recommendedName>
    <alternativeName>
        <fullName evidence="2">50S ribosomal protein L9</fullName>
    </alternativeName>
</protein>
<accession>A0PX93</accession>